<dbReference type="EMBL" id="AY292620">
    <property type="protein sequence ID" value="AAQ54654.1"/>
    <property type="molecule type" value="Genomic_DNA"/>
</dbReference>
<dbReference type="SMR" id="Q6JWW5"/>
<dbReference type="GO" id="GO:0022625">
    <property type="term" value="C:cytosolic large ribosomal subunit"/>
    <property type="evidence" value="ECO:0007669"/>
    <property type="project" value="TreeGrafter"/>
</dbReference>
<dbReference type="GO" id="GO:0005634">
    <property type="term" value="C:nucleus"/>
    <property type="evidence" value="ECO:0007669"/>
    <property type="project" value="UniProtKB-SubCell"/>
</dbReference>
<dbReference type="GO" id="GO:0008097">
    <property type="term" value="F:5S rRNA binding"/>
    <property type="evidence" value="ECO:0007669"/>
    <property type="project" value="InterPro"/>
</dbReference>
<dbReference type="GO" id="GO:0003735">
    <property type="term" value="F:structural constituent of ribosome"/>
    <property type="evidence" value="ECO:0007669"/>
    <property type="project" value="InterPro"/>
</dbReference>
<dbReference type="GO" id="GO:0000027">
    <property type="term" value="P:ribosomal large subunit assembly"/>
    <property type="evidence" value="ECO:0007669"/>
    <property type="project" value="TreeGrafter"/>
</dbReference>
<dbReference type="GO" id="GO:0006412">
    <property type="term" value="P:translation"/>
    <property type="evidence" value="ECO:0007669"/>
    <property type="project" value="InterPro"/>
</dbReference>
<dbReference type="CDD" id="cd00432">
    <property type="entry name" value="Ribosomal_L18_L5e"/>
    <property type="match status" value="1"/>
</dbReference>
<dbReference type="FunFam" id="3.30.420.100:FF:000002">
    <property type="entry name" value="60S ribosomal protein L5"/>
    <property type="match status" value="1"/>
</dbReference>
<dbReference type="Gene3D" id="3.30.420.100">
    <property type="match status" value="1"/>
</dbReference>
<dbReference type="HAMAP" id="MF_01337_A">
    <property type="entry name" value="Ribosomal_uL18_A"/>
    <property type="match status" value="1"/>
</dbReference>
<dbReference type="InterPro" id="IPR005485">
    <property type="entry name" value="Rbsml_uL18_euk"/>
</dbReference>
<dbReference type="InterPro" id="IPR025607">
    <property type="entry name" value="Ribosomal_uL18_C_euk"/>
</dbReference>
<dbReference type="PANTHER" id="PTHR23410:SF12">
    <property type="entry name" value="LARGE RIBOSOMAL SUBUNIT PROTEIN UL18"/>
    <property type="match status" value="1"/>
</dbReference>
<dbReference type="PANTHER" id="PTHR23410">
    <property type="entry name" value="RIBOSOMAL PROTEIN L5-RELATED"/>
    <property type="match status" value="1"/>
</dbReference>
<dbReference type="Pfam" id="PF14204">
    <property type="entry name" value="Ribosomal_L18_c"/>
    <property type="match status" value="1"/>
</dbReference>
<dbReference type="Pfam" id="PF17144">
    <property type="entry name" value="Ribosomal_L5e"/>
    <property type="match status" value="1"/>
</dbReference>
<dbReference type="PRINTS" id="PR00058">
    <property type="entry name" value="RIBOSOMALL5"/>
</dbReference>
<dbReference type="SUPFAM" id="SSF53137">
    <property type="entry name" value="Translational machinery components"/>
    <property type="match status" value="1"/>
</dbReference>
<keyword id="KW-0963">Cytoplasm</keyword>
<keyword id="KW-0539">Nucleus</keyword>
<keyword id="KW-0687">Ribonucleoprotein</keyword>
<keyword id="KW-0689">Ribosomal protein</keyword>
<keyword id="KW-0694">RNA-binding</keyword>
<keyword id="KW-0699">rRNA-binding</keyword>
<proteinExistence type="inferred from homology"/>
<organism>
    <name type="scientific">Oikopleura dioica</name>
    <name type="common">Tunicate</name>
    <dbReference type="NCBI Taxonomy" id="34765"/>
    <lineage>
        <taxon>Eukaryota</taxon>
        <taxon>Metazoa</taxon>
        <taxon>Chordata</taxon>
        <taxon>Tunicata</taxon>
        <taxon>Appendicularia</taxon>
        <taxon>Copelata</taxon>
        <taxon>Oikopleuridae</taxon>
        <taxon>Oikopleura</taxon>
    </lineage>
</organism>
<sequence length="303" mass="34417">MAKKGRGRSKGTFVAVLKNKAYFKRYQPKFKRRREGKTDYFARKRLCVQDKNKYNTPKYRLVVRVTNKDIIAQIAYARLQGDVIVTSAYAHELPRYGVSVGLTNYSAAYATGLLIGRRVLQKFGLDSMYEGQIEVDGDEFYEEADAAEKASFRCYLDTGLARTSTGARIFGVLKGCADAGIDIPHSPKRFPGFADGKLNAEAHKDHIFGGHVGDYMEKLEEENEEAYKRQFSRFIKNGINSENIEEMYKKAHAAIRADPSPKAKVEKTVDKKRWNRAKISYAQRRARVAQVKASFLRAQEAEE</sequence>
<evidence type="ECO:0000250" key="1">
    <source>
        <dbReference type="UniProtKB" id="P26321"/>
    </source>
</evidence>
<evidence type="ECO:0000305" key="2"/>
<name>RL5_OIKDI</name>
<accession>Q6JWW5</accession>
<gene>
    <name type="primary">RPL5</name>
</gene>
<comment type="function">
    <text evidence="1">Component of the ribosome, a large ribonucleoprotein complex responsible for the synthesis of proteins in the cell. The small ribosomal subunit (SSU) binds messenger RNAs (mRNAs) and translates the encoded message by selecting cognate aminoacyl-transfer RNA (tRNA) molecules. The large subunit (LSU) contains the ribosomal catalytic site termed the peptidyl transferase center (PTC), which catalyzes the formation of peptide bonds, thereby polymerizing the amino acids delivered by tRNAs into a polypeptide chain. The nascent polypeptides leave the ribosome through a tunnel in the LSU and interact with protein factors that function in enzymatic processing, targeting, and the membrane insertion of nascent chains at the exit of the ribosomal tunnel.</text>
</comment>
<comment type="subunit">
    <text evidence="1">Component of the large ribosomal subunit (LSU).</text>
</comment>
<comment type="subcellular location">
    <subcellularLocation>
        <location evidence="1">Cytoplasm</location>
    </subcellularLocation>
    <subcellularLocation>
        <location evidence="1">Nucleus</location>
    </subcellularLocation>
</comment>
<comment type="similarity">
    <text evidence="2">Belongs to the universal ribosomal protein uL18 family.</text>
</comment>
<protein>
    <recommendedName>
        <fullName evidence="2">Large ribosomal subunit protein uL18</fullName>
    </recommendedName>
    <alternativeName>
        <fullName>60S ribosomal protein L5</fullName>
    </alternativeName>
</protein>
<reference key="1">
    <citation type="submission" date="2003-05" db="EMBL/GenBank/DDBJ databases">
        <title>Hypervariable intron/exon organizations in the short-lived chordate Oikopleura and the nematode Caenorhabditis.</title>
        <authorList>
            <person name="Edvardsen R.B."/>
            <person name="Chourrout D."/>
        </authorList>
    </citation>
    <scope>NUCLEOTIDE SEQUENCE [GENOMIC DNA]</scope>
</reference>
<feature type="chain" id="PRO_0000291565" description="Large ribosomal subunit protein uL18">
    <location>
        <begin position="1"/>
        <end position="303"/>
    </location>
</feature>